<comment type="function">
    <text evidence="1">Located on the platform of the 30S subunit, it bridges several disparate RNA helices of the 16S rRNA. Forms part of the Shine-Dalgarno cleft in the 70S ribosome.</text>
</comment>
<comment type="subunit">
    <text evidence="1">Part of the 30S ribosomal subunit. Interacts with proteins S7 and S18. Binds to IF-3.</text>
</comment>
<comment type="similarity">
    <text evidence="1">Belongs to the universal ribosomal protein uS11 family.</text>
</comment>
<feature type="chain" id="PRO_0000294868" description="Small ribosomal subunit protein uS11">
    <location>
        <begin position="1"/>
        <end position="127"/>
    </location>
</feature>
<dbReference type="EMBL" id="AM295007">
    <property type="protein sequence ID" value="CAM29411.1"/>
    <property type="molecule type" value="Genomic_DNA"/>
</dbReference>
<dbReference type="RefSeq" id="WP_001118387.1">
    <property type="nucleotide sequence ID" value="NC_009332.1"/>
</dbReference>
<dbReference type="SMR" id="A2RC39"/>
<dbReference type="GeneID" id="93825319"/>
<dbReference type="KEGG" id="spf:SpyM50068"/>
<dbReference type="HOGENOM" id="CLU_072439_5_0_9"/>
<dbReference type="GO" id="GO:1990904">
    <property type="term" value="C:ribonucleoprotein complex"/>
    <property type="evidence" value="ECO:0007669"/>
    <property type="project" value="UniProtKB-KW"/>
</dbReference>
<dbReference type="GO" id="GO:0005840">
    <property type="term" value="C:ribosome"/>
    <property type="evidence" value="ECO:0007669"/>
    <property type="project" value="UniProtKB-KW"/>
</dbReference>
<dbReference type="GO" id="GO:0019843">
    <property type="term" value="F:rRNA binding"/>
    <property type="evidence" value="ECO:0007669"/>
    <property type="project" value="UniProtKB-UniRule"/>
</dbReference>
<dbReference type="GO" id="GO:0003735">
    <property type="term" value="F:structural constituent of ribosome"/>
    <property type="evidence" value="ECO:0007669"/>
    <property type="project" value="InterPro"/>
</dbReference>
<dbReference type="GO" id="GO:0006412">
    <property type="term" value="P:translation"/>
    <property type="evidence" value="ECO:0007669"/>
    <property type="project" value="UniProtKB-UniRule"/>
</dbReference>
<dbReference type="FunFam" id="3.30.420.80:FF:000001">
    <property type="entry name" value="30S ribosomal protein S11"/>
    <property type="match status" value="1"/>
</dbReference>
<dbReference type="Gene3D" id="3.30.420.80">
    <property type="entry name" value="Ribosomal protein S11"/>
    <property type="match status" value="1"/>
</dbReference>
<dbReference type="HAMAP" id="MF_01310">
    <property type="entry name" value="Ribosomal_uS11"/>
    <property type="match status" value="1"/>
</dbReference>
<dbReference type="InterPro" id="IPR001971">
    <property type="entry name" value="Ribosomal_uS11"/>
</dbReference>
<dbReference type="InterPro" id="IPR019981">
    <property type="entry name" value="Ribosomal_uS11_bac-type"/>
</dbReference>
<dbReference type="InterPro" id="IPR018102">
    <property type="entry name" value="Ribosomal_uS11_CS"/>
</dbReference>
<dbReference type="InterPro" id="IPR036967">
    <property type="entry name" value="Ribosomal_uS11_sf"/>
</dbReference>
<dbReference type="NCBIfam" id="NF003698">
    <property type="entry name" value="PRK05309.1"/>
    <property type="match status" value="1"/>
</dbReference>
<dbReference type="NCBIfam" id="TIGR03632">
    <property type="entry name" value="uS11_bact"/>
    <property type="match status" value="1"/>
</dbReference>
<dbReference type="PANTHER" id="PTHR11759">
    <property type="entry name" value="40S RIBOSOMAL PROTEIN S14/30S RIBOSOMAL PROTEIN S11"/>
    <property type="match status" value="1"/>
</dbReference>
<dbReference type="Pfam" id="PF00411">
    <property type="entry name" value="Ribosomal_S11"/>
    <property type="match status" value="1"/>
</dbReference>
<dbReference type="PIRSF" id="PIRSF002131">
    <property type="entry name" value="Ribosomal_S11"/>
    <property type="match status" value="1"/>
</dbReference>
<dbReference type="SUPFAM" id="SSF53137">
    <property type="entry name" value="Translational machinery components"/>
    <property type="match status" value="1"/>
</dbReference>
<dbReference type="PROSITE" id="PS00054">
    <property type="entry name" value="RIBOSOMAL_S11"/>
    <property type="match status" value="1"/>
</dbReference>
<accession>A2RC39</accession>
<reference key="1">
    <citation type="journal article" date="2007" name="J. Bacteriol.">
        <title>Complete genome of acute rheumatic fever-associated serotype M5 Streptococcus pyogenes strain Manfredo.</title>
        <authorList>
            <person name="Holden M.T.G."/>
            <person name="Scott A."/>
            <person name="Cherevach I."/>
            <person name="Chillingworth T."/>
            <person name="Churcher C."/>
            <person name="Cronin A."/>
            <person name="Dowd L."/>
            <person name="Feltwell T."/>
            <person name="Hamlin N."/>
            <person name="Holroyd S."/>
            <person name="Jagels K."/>
            <person name="Moule S."/>
            <person name="Mungall K."/>
            <person name="Quail M.A."/>
            <person name="Price C."/>
            <person name="Rabbinowitsch E."/>
            <person name="Sharp S."/>
            <person name="Skelton J."/>
            <person name="Whitehead S."/>
            <person name="Barrell B.G."/>
            <person name="Kehoe M."/>
            <person name="Parkhill J."/>
        </authorList>
    </citation>
    <scope>NUCLEOTIDE SEQUENCE [LARGE SCALE GENOMIC DNA]</scope>
    <source>
        <strain>Manfredo</strain>
    </source>
</reference>
<keyword id="KW-0687">Ribonucleoprotein</keyword>
<keyword id="KW-0689">Ribosomal protein</keyword>
<keyword id="KW-0694">RNA-binding</keyword>
<keyword id="KW-0699">rRNA-binding</keyword>
<organism>
    <name type="scientific">Streptococcus pyogenes serotype M5 (strain Manfredo)</name>
    <dbReference type="NCBI Taxonomy" id="160491"/>
    <lineage>
        <taxon>Bacteria</taxon>
        <taxon>Bacillati</taxon>
        <taxon>Bacillota</taxon>
        <taxon>Bacilli</taxon>
        <taxon>Lactobacillales</taxon>
        <taxon>Streptococcaceae</taxon>
        <taxon>Streptococcus</taxon>
    </lineage>
</organism>
<evidence type="ECO:0000255" key="1">
    <source>
        <dbReference type="HAMAP-Rule" id="MF_01310"/>
    </source>
</evidence>
<evidence type="ECO:0000305" key="2"/>
<proteinExistence type="inferred from homology"/>
<name>RS11_STRPG</name>
<gene>
    <name evidence="1" type="primary">rpsK</name>
    <name type="ordered locus">SpyM50068</name>
</gene>
<sequence>MAKPTRKRRVKKNIESGVAHIHATFNNTIVMITDVHGNALAWSSAGALGFKGSRKSTPFAAQMAAEAAAKSAQEHGLKTVEVTVKGPGSGRESAIRALAAAGLEVTAIRDVTPVPHNGARPPKRRRV</sequence>
<protein>
    <recommendedName>
        <fullName evidence="1">Small ribosomal subunit protein uS11</fullName>
    </recommendedName>
    <alternativeName>
        <fullName evidence="2">30S ribosomal protein S11</fullName>
    </alternativeName>
</protein>